<feature type="chain" id="PRO_0000332374" description="Cobyric acid synthase">
    <location>
        <begin position="1"/>
        <end position="484"/>
    </location>
</feature>
<feature type="domain" description="GATase cobBQ-type" evidence="1">
    <location>
        <begin position="248"/>
        <end position="435"/>
    </location>
</feature>
<feature type="active site" description="Nucleophile" evidence="1">
    <location>
        <position position="329"/>
    </location>
</feature>
<feature type="active site" evidence="1">
    <location>
        <position position="427"/>
    </location>
</feature>
<accession>B0KT65</accession>
<sequence>MTTLMVQGTTSDAGKSTLVTALCRWLLRQGVGVVPFKPQNMALNSAVTADGGEIGRAQAVQAQACRLAPHTDMNPVLLKPNSDTGAQVIIHGRAVTSMNAVAYHDYKATAMQAVLASHQRLSAAYPVVMVEGAGSPAEINLRAGDIANMGFAEAVDCPVILVADINRGGVFAHLVGTLELLSPSEQARVKGFVINRFRGDIALLQPGLDWLEQRTGKPVLGVLPYVTDLHLEAEDGIDVRQGAKLARVLKVIVPVLPRISNHTDFDPLRLHPQVDLQFIGPGQPIPAADLIILPGSKSVRGDLAQLRERGWDKAIERHLRYGGKLIGICGGLQMLGRQVHDPLGLEGAAGSSQGLGLLDYATVLEAEKQLRNVAGTLNLEAAAVAGYEIHAGVTSGPALERPAVQLADGRCDGAVSADGQILATYLHGLFEGSQSCAALLRWAGLEDVQAIDYEALRERDIERLADLVEKHLDTALLRQLCGVA</sequence>
<reference key="1">
    <citation type="submission" date="2008-01" db="EMBL/GenBank/DDBJ databases">
        <title>Complete sequence of Pseudomonas putida GB-1.</title>
        <authorList>
            <consortium name="US DOE Joint Genome Institute"/>
            <person name="Copeland A."/>
            <person name="Lucas S."/>
            <person name="Lapidus A."/>
            <person name="Barry K."/>
            <person name="Glavina del Rio T."/>
            <person name="Dalin E."/>
            <person name="Tice H."/>
            <person name="Pitluck S."/>
            <person name="Bruce D."/>
            <person name="Goodwin L."/>
            <person name="Chertkov O."/>
            <person name="Brettin T."/>
            <person name="Detter J.C."/>
            <person name="Han C."/>
            <person name="Kuske C.R."/>
            <person name="Schmutz J."/>
            <person name="Larimer F."/>
            <person name="Land M."/>
            <person name="Hauser L."/>
            <person name="Kyrpides N."/>
            <person name="Kim E."/>
            <person name="McCarthy J.K."/>
            <person name="Richardson P."/>
        </authorList>
    </citation>
    <scope>NUCLEOTIDE SEQUENCE [LARGE SCALE GENOMIC DNA]</scope>
    <source>
        <strain>GB-1</strain>
    </source>
</reference>
<comment type="function">
    <text evidence="1">Catalyzes amidations at positions B, D, E, and G on adenosylcobyrinic A,C-diamide. NH(2) groups are provided by glutamine, and one molecule of ATP is hydrogenolyzed for each amidation.</text>
</comment>
<comment type="pathway">
    <text evidence="1">Cofactor biosynthesis; adenosylcobalamin biosynthesis.</text>
</comment>
<comment type="similarity">
    <text evidence="1">Belongs to the CobB/CobQ family. CobQ subfamily.</text>
</comment>
<keyword id="KW-0169">Cobalamin biosynthesis</keyword>
<keyword id="KW-0315">Glutamine amidotransferase</keyword>
<evidence type="ECO:0000255" key="1">
    <source>
        <dbReference type="HAMAP-Rule" id="MF_00028"/>
    </source>
</evidence>
<dbReference type="EMBL" id="CP000926">
    <property type="protein sequence ID" value="ABY97183.1"/>
    <property type="molecule type" value="Genomic_DNA"/>
</dbReference>
<dbReference type="RefSeq" id="WP_012270958.1">
    <property type="nucleotide sequence ID" value="NC_010322.1"/>
</dbReference>
<dbReference type="SMR" id="B0KT65"/>
<dbReference type="KEGG" id="ppg:PputGB1_1276"/>
<dbReference type="eggNOG" id="COG1492">
    <property type="taxonomic scope" value="Bacteria"/>
</dbReference>
<dbReference type="HOGENOM" id="CLU_019250_2_2_6"/>
<dbReference type="UniPathway" id="UPA00148"/>
<dbReference type="Proteomes" id="UP000002157">
    <property type="component" value="Chromosome"/>
</dbReference>
<dbReference type="GO" id="GO:0015420">
    <property type="term" value="F:ABC-type vitamin B12 transporter activity"/>
    <property type="evidence" value="ECO:0007669"/>
    <property type="project" value="UniProtKB-UniRule"/>
</dbReference>
<dbReference type="GO" id="GO:0003824">
    <property type="term" value="F:catalytic activity"/>
    <property type="evidence" value="ECO:0007669"/>
    <property type="project" value="InterPro"/>
</dbReference>
<dbReference type="GO" id="GO:0009236">
    <property type="term" value="P:cobalamin biosynthetic process"/>
    <property type="evidence" value="ECO:0007669"/>
    <property type="project" value="UniProtKB-UniRule"/>
</dbReference>
<dbReference type="CDD" id="cd05389">
    <property type="entry name" value="CobQ_N"/>
    <property type="match status" value="1"/>
</dbReference>
<dbReference type="CDD" id="cd01750">
    <property type="entry name" value="GATase1_CobQ"/>
    <property type="match status" value="1"/>
</dbReference>
<dbReference type="Gene3D" id="3.40.50.880">
    <property type="match status" value="1"/>
</dbReference>
<dbReference type="Gene3D" id="3.40.50.300">
    <property type="entry name" value="P-loop containing nucleotide triphosphate hydrolases"/>
    <property type="match status" value="1"/>
</dbReference>
<dbReference type="HAMAP" id="MF_00028">
    <property type="entry name" value="CobQ"/>
    <property type="match status" value="1"/>
</dbReference>
<dbReference type="InterPro" id="IPR029062">
    <property type="entry name" value="Class_I_gatase-like"/>
</dbReference>
<dbReference type="InterPro" id="IPR002586">
    <property type="entry name" value="CobQ/CobB/MinD/ParA_Nub-bd_dom"/>
</dbReference>
<dbReference type="InterPro" id="IPR033949">
    <property type="entry name" value="CobQ_GATase1"/>
</dbReference>
<dbReference type="InterPro" id="IPR047045">
    <property type="entry name" value="CobQ_N"/>
</dbReference>
<dbReference type="InterPro" id="IPR004459">
    <property type="entry name" value="CobQ_synth"/>
</dbReference>
<dbReference type="InterPro" id="IPR011698">
    <property type="entry name" value="GATase_3"/>
</dbReference>
<dbReference type="InterPro" id="IPR027417">
    <property type="entry name" value="P-loop_NTPase"/>
</dbReference>
<dbReference type="NCBIfam" id="TIGR00313">
    <property type="entry name" value="cobQ"/>
    <property type="match status" value="1"/>
</dbReference>
<dbReference type="NCBIfam" id="NF001989">
    <property type="entry name" value="PRK00784.1"/>
    <property type="match status" value="1"/>
</dbReference>
<dbReference type="PANTHER" id="PTHR21343:SF1">
    <property type="entry name" value="COBYRIC ACID SYNTHASE"/>
    <property type="match status" value="1"/>
</dbReference>
<dbReference type="PANTHER" id="PTHR21343">
    <property type="entry name" value="DETHIOBIOTIN SYNTHETASE"/>
    <property type="match status" value="1"/>
</dbReference>
<dbReference type="Pfam" id="PF01656">
    <property type="entry name" value="CbiA"/>
    <property type="match status" value="1"/>
</dbReference>
<dbReference type="Pfam" id="PF07685">
    <property type="entry name" value="GATase_3"/>
    <property type="match status" value="1"/>
</dbReference>
<dbReference type="SUPFAM" id="SSF52317">
    <property type="entry name" value="Class I glutamine amidotransferase-like"/>
    <property type="match status" value="1"/>
</dbReference>
<dbReference type="SUPFAM" id="SSF52540">
    <property type="entry name" value="P-loop containing nucleoside triphosphate hydrolases"/>
    <property type="match status" value="1"/>
</dbReference>
<dbReference type="PROSITE" id="PS51274">
    <property type="entry name" value="GATASE_COBBQ"/>
    <property type="match status" value="1"/>
</dbReference>
<proteinExistence type="inferred from homology"/>
<gene>
    <name evidence="1" type="primary">cobQ</name>
    <name type="ordered locus">PputGB1_1276</name>
</gene>
<protein>
    <recommendedName>
        <fullName evidence="1">Cobyric acid synthase</fullName>
    </recommendedName>
</protein>
<organism>
    <name type="scientific">Pseudomonas putida (strain GB-1)</name>
    <dbReference type="NCBI Taxonomy" id="76869"/>
    <lineage>
        <taxon>Bacteria</taxon>
        <taxon>Pseudomonadati</taxon>
        <taxon>Pseudomonadota</taxon>
        <taxon>Gammaproteobacteria</taxon>
        <taxon>Pseudomonadales</taxon>
        <taxon>Pseudomonadaceae</taxon>
        <taxon>Pseudomonas</taxon>
    </lineage>
</organism>
<name>COBQ_PSEPG</name>